<comment type="function">
    <text>Flagellin is the subunit protein which polymerizes to form the filaments of bacterial flagella. Important for motility and virulence.</text>
</comment>
<comment type="subunit">
    <text>Heteromer of FlaA and FlaB. FlaB is located proximal to the hook while the remainder of the filament is composed of the predominant FlaA.</text>
</comment>
<comment type="subcellular location">
    <subcellularLocation>
        <location>Secreted</location>
    </subcellularLocation>
    <subcellularLocation>
        <location>Bacterial flagellum</location>
    </subcellularLocation>
</comment>
<comment type="similarity">
    <text evidence="3">Belongs to the bacterial flagellin family.</text>
</comment>
<accession>P0A0S1</accession>
<accession>Q03843</accession>
<gene>
    <name type="primary">flaA</name>
    <name type="ordered locus">HP_0601</name>
</gene>
<evidence type="ECO:0000269" key="1">
    <source>
    </source>
</evidence>
<evidence type="ECO:0000269" key="2">
    <source>
    </source>
</evidence>
<evidence type="ECO:0000305" key="3"/>
<name>FLAA_HELPY</name>
<reference key="1">
    <citation type="journal article" date="1992" name="Mol. Microbiol.">
        <title>Cloning and genetic characterization of a Helicobacter pylori flagellin gene.</title>
        <authorList>
            <person name="Leying H."/>
            <person name="Suerbaum S."/>
            <person name="Geis G."/>
            <person name="Haas R."/>
        </authorList>
    </citation>
    <scope>NUCLEOTIDE SEQUENCE [GENOMIC DNA]</scope>
    <scope>PROTEIN SEQUENCE OF 2-14</scope>
    <source>
        <strain>NTCC 11637 / Isolate 898-1</strain>
    </source>
</reference>
<reference key="2">
    <citation type="journal article" date="1997" name="Nature">
        <title>The complete genome sequence of the gastric pathogen Helicobacter pylori.</title>
        <authorList>
            <person name="Tomb J.-F."/>
            <person name="White O."/>
            <person name="Kerlavage A.R."/>
            <person name="Clayton R.A."/>
            <person name="Sutton G.G."/>
            <person name="Fleischmann R.D."/>
            <person name="Ketchum K.A."/>
            <person name="Klenk H.-P."/>
            <person name="Gill S.R."/>
            <person name="Dougherty B.A."/>
            <person name="Nelson K.E."/>
            <person name="Quackenbush J."/>
            <person name="Zhou L."/>
            <person name="Kirkness E.F."/>
            <person name="Peterson S.N."/>
            <person name="Loftus B.J."/>
            <person name="Richardson D.L."/>
            <person name="Dodson R.J."/>
            <person name="Khalak H.G."/>
            <person name="Glodek A."/>
            <person name="McKenney K."/>
            <person name="FitzGerald L.M."/>
            <person name="Lee N."/>
            <person name="Adams M.D."/>
            <person name="Hickey E.K."/>
            <person name="Berg D.E."/>
            <person name="Gocayne J.D."/>
            <person name="Utterback T.R."/>
            <person name="Peterson J.D."/>
            <person name="Kelley J.M."/>
            <person name="Cotton M.D."/>
            <person name="Weidman J.F."/>
            <person name="Fujii C."/>
            <person name="Bowman C."/>
            <person name="Watthey L."/>
            <person name="Wallin E."/>
            <person name="Hayes W.S."/>
            <person name="Borodovsky M."/>
            <person name="Karp P.D."/>
            <person name="Smith H.O."/>
            <person name="Fraser C.M."/>
            <person name="Venter J.C."/>
        </authorList>
    </citation>
    <scope>NUCLEOTIDE SEQUENCE [LARGE SCALE GENOMIC DNA]</scope>
    <source>
        <strain>ATCC 700392 / 26695</strain>
    </source>
</reference>
<reference key="3">
    <citation type="journal article" date="1991" name="J. Bacteriol.">
        <title>Identification, characterization, and spatial localization of two flagellin species in Helicobacter pylori flagella.</title>
        <authorList>
            <person name="Kostrzynska M."/>
            <person name="Betts J.D."/>
            <person name="Austin J.W."/>
            <person name="Trust T.J."/>
        </authorList>
    </citation>
    <scope>PROTEIN SEQUENCE OF 2-27</scope>
    <scope>CHARACTERIZATION</scope>
    <source>
        <strain>NTCC 11637 / Isolate 5294</strain>
        <strain>NTCC 11637 / Isolate 915</strain>
    </source>
</reference>
<organism>
    <name type="scientific">Helicobacter pylori (strain ATCC 700392 / 26695)</name>
    <name type="common">Campylobacter pylori</name>
    <dbReference type="NCBI Taxonomy" id="85962"/>
    <lineage>
        <taxon>Bacteria</taxon>
        <taxon>Pseudomonadati</taxon>
        <taxon>Campylobacterota</taxon>
        <taxon>Epsilonproteobacteria</taxon>
        <taxon>Campylobacterales</taxon>
        <taxon>Helicobacteraceae</taxon>
        <taxon>Helicobacter</taxon>
    </lineage>
</organism>
<feature type="initiator methionine" description="Removed" evidence="1 2">
    <location>
        <position position="1"/>
    </location>
</feature>
<feature type="chain" id="PRO_0000182609" description="Flagellin A">
    <location>
        <begin position="2"/>
        <end position="510"/>
    </location>
</feature>
<feature type="sequence variant" description="In strain: Isolate 5294.">
    <original>H</original>
    <variation>G</variation>
    <location>
        <position position="15"/>
    </location>
</feature>
<feature type="sequence conflict" description="In Ref. 1; CAA43148." evidence="3" ref="1">
    <original>A</original>
    <variation>E</variation>
    <location>
        <position position="19"/>
    </location>
</feature>
<dbReference type="EMBL" id="X60746">
    <property type="protein sequence ID" value="CAA43148.1"/>
    <property type="molecule type" value="Genomic_DNA"/>
</dbReference>
<dbReference type="EMBL" id="AE000511">
    <property type="protein sequence ID" value="AAD07667.1"/>
    <property type="molecule type" value="Genomic_DNA"/>
</dbReference>
<dbReference type="PIR" id="A64595">
    <property type="entry name" value="A64595"/>
</dbReference>
<dbReference type="RefSeq" id="NP_207396.1">
    <property type="nucleotide sequence ID" value="NC_000915.1"/>
</dbReference>
<dbReference type="RefSeq" id="WP_000885496.1">
    <property type="nucleotide sequence ID" value="NC_018939.1"/>
</dbReference>
<dbReference type="SMR" id="P0A0S1"/>
<dbReference type="FunCoup" id="P0A0S1">
    <property type="interactions" value="82"/>
</dbReference>
<dbReference type="IntAct" id="P0A0S1">
    <property type="interactions" value="6"/>
</dbReference>
<dbReference type="MINT" id="P0A0S1"/>
<dbReference type="STRING" id="85962.HP_0601"/>
<dbReference type="PaxDb" id="85962-C694_03110"/>
<dbReference type="EnsemblBacteria" id="AAD07667">
    <property type="protein sequence ID" value="AAD07667"/>
    <property type="gene ID" value="HP_0601"/>
</dbReference>
<dbReference type="KEGG" id="heo:C694_03110"/>
<dbReference type="KEGG" id="hpy:HP_0601"/>
<dbReference type="PATRIC" id="fig|85962.47.peg.649"/>
<dbReference type="eggNOG" id="COG1344">
    <property type="taxonomic scope" value="Bacteria"/>
</dbReference>
<dbReference type="InParanoid" id="P0A0S1"/>
<dbReference type="OrthoDB" id="9796789at2"/>
<dbReference type="PhylomeDB" id="P0A0S1"/>
<dbReference type="Proteomes" id="UP000000429">
    <property type="component" value="Chromosome"/>
</dbReference>
<dbReference type="GO" id="GO:0009288">
    <property type="term" value="C:bacterial-type flagellum"/>
    <property type="evidence" value="ECO:0007669"/>
    <property type="project" value="UniProtKB-SubCell"/>
</dbReference>
<dbReference type="GO" id="GO:0005576">
    <property type="term" value="C:extracellular region"/>
    <property type="evidence" value="ECO:0007669"/>
    <property type="project" value="UniProtKB-SubCell"/>
</dbReference>
<dbReference type="GO" id="GO:0005198">
    <property type="term" value="F:structural molecule activity"/>
    <property type="evidence" value="ECO:0007669"/>
    <property type="project" value="InterPro"/>
</dbReference>
<dbReference type="GO" id="GO:0071978">
    <property type="term" value="P:bacterial-type flagellum-dependent swarming motility"/>
    <property type="evidence" value="ECO:0000315"/>
    <property type="project" value="CACAO"/>
</dbReference>
<dbReference type="FunFam" id="1.20.1330.10:FF:000001">
    <property type="entry name" value="Flagellin"/>
    <property type="match status" value="1"/>
</dbReference>
<dbReference type="Gene3D" id="2.60.40.4390">
    <property type="match status" value="1"/>
</dbReference>
<dbReference type="Gene3D" id="3.30.70.2120">
    <property type="match status" value="1"/>
</dbReference>
<dbReference type="Gene3D" id="1.20.1330.10">
    <property type="entry name" value="f41 fragment of flagellin, N-terminal domain"/>
    <property type="match status" value="2"/>
</dbReference>
<dbReference type="Gene3D" id="6.10.10.10">
    <property type="entry name" value="Flagellar export chaperone, C-terminal domain"/>
    <property type="match status" value="1"/>
</dbReference>
<dbReference type="InterPro" id="IPR001492">
    <property type="entry name" value="Flagellin"/>
</dbReference>
<dbReference type="InterPro" id="IPR046358">
    <property type="entry name" value="Flagellin_C"/>
</dbReference>
<dbReference type="InterPro" id="IPR042187">
    <property type="entry name" value="Flagellin_C_sub2"/>
</dbReference>
<dbReference type="InterPro" id="IPR010810">
    <property type="entry name" value="Flagellin_hook_IN_motif"/>
</dbReference>
<dbReference type="InterPro" id="IPR001029">
    <property type="entry name" value="Flagellin_N"/>
</dbReference>
<dbReference type="NCBIfam" id="NF009234">
    <property type="entry name" value="PRK12584.1"/>
    <property type="match status" value="1"/>
</dbReference>
<dbReference type="NCBIfam" id="NF010115">
    <property type="entry name" value="PRK13588.1"/>
    <property type="match status" value="1"/>
</dbReference>
<dbReference type="PANTHER" id="PTHR42792">
    <property type="entry name" value="FLAGELLIN"/>
    <property type="match status" value="1"/>
</dbReference>
<dbReference type="PANTHER" id="PTHR42792:SF2">
    <property type="entry name" value="FLAGELLIN"/>
    <property type="match status" value="1"/>
</dbReference>
<dbReference type="Pfam" id="PF00700">
    <property type="entry name" value="Flagellin_C"/>
    <property type="match status" value="1"/>
</dbReference>
<dbReference type="Pfam" id="PF07196">
    <property type="entry name" value="Flagellin_IN"/>
    <property type="match status" value="2"/>
</dbReference>
<dbReference type="Pfam" id="PF00669">
    <property type="entry name" value="Flagellin_N"/>
    <property type="match status" value="1"/>
</dbReference>
<dbReference type="PRINTS" id="PR00207">
    <property type="entry name" value="FLAGELLIN"/>
</dbReference>
<dbReference type="SUPFAM" id="SSF64518">
    <property type="entry name" value="Phase 1 flagellin"/>
    <property type="match status" value="1"/>
</dbReference>
<protein>
    <recommendedName>
        <fullName>Flagellin A</fullName>
    </recommendedName>
</protein>
<proteinExistence type="evidence at protein level"/>
<keyword id="KW-0975">Bacterial flagellum</keyword>
<keyword id="KW-0903">Direct protein sequencing</keyword>
<keyword id="KW-1185">Reference proteome</keyword>
<keyword id="KW-0964">Secreted</keyword>
<keyword id="KW-0843">Virulence</keyword>
<sequence>MAFQVNTNINAMNAHVQSALTQNALKTSLERLSSGLRINKAADDASGMTVADSLRSQASSLGQAIANTNDGMGIIQVADKAMDEQLKILDTVKVKATQAAQDGQTTESRKAIQSDIVRLIQGLDNIGNTTTYNGQALLSGQFTNKEFQVGAYSNQSIKASIGSTTSDKIGQVRIATGALITASGDISLTFKQVDGVNDVTLESVKVSSSAGTGIGVLAEVINKNSNRTGVKAYASVITTSDVAVQSGSLSNLTLNGIHLGNIADIKKNDSDGRLVAAINAVTSETGVEAYTDQKGRLNLRSIDGRGIEIKTDSVSNGPSALTMVNGGQDLTKGSTNYGRLSLTRLDAKSINVVSASDSQHLGFTAIGFGESQVAETTVNLRDVTGNFNANVKSASGANYNAVIASGNQSLGSGVTTLRGAMVVIDIAESAMKMLDKVRSDLGSVQNQMISTVNNISITQVNVKAAESQIRDVDFAEESANFNKNNILAQSGSYAMSQANTVQQNILRLLT</sequence>